<feature type="chain" id="PRO_0000412511" description="Malonyl-[acyl-carrier protein] O-methyltransferase">
    <location>
        <begin position="1"/>
        <end position="275"/>
    </location>
</feature>
<organism>
    <name type="scientific">Methylococcus capsulatus (strain ATCC 33009 / NCIMB 11132 / Bath)</name>
    <dbReference type="NCBI Taxonomy" id="243233"/>
    <lineage>
        <taxon>Bacteria</taxon>
        <taxon>Pseudomonadati</taxon>
        <taxon>Pseudomonadota</taxon>
        <taxon>Gammaproteobacteria</taxon>
        <taxon>Methylococcales</taxon>
        <taxon>Methylococcaceae</taxon>
        <taxon>Methylococcus</taxon>
    </lineage>
</organism>
<evidence type="ECO:0000255" key="1">
    <source>
        <dbReference type="HAMAP-Rule" id="MF_00835"/>
    </source>
</evidence>
<gene>
    <name evidence="1" type="primary">bioC</name>
    <name type="ordered locus">MCA1128</name>
</gene>
<comment type="function">
    <text evidence="1">Converts the free carboxyl group of a malonyl-thioester to its methyl ester by transfer of a methyl group from S-adenosyl-L-methionine (SAM). It allows to synthesize pimeloyl-ACP via the fatty acid synthetic pathway.</text>
</comment>
<comment type="catalytic activity">
    <reaction evidence="1">
        <text>malonyl-[ACP] + S-adenosyl-L-methionine = malonyl-[ACP] methyl ester + S-adenosyl-L-homocysteine</text>
        <dbReference type="Rhea" id="RHEA:17105"/>
        <dbReference type="Rhea" id="RHEA-COMP:9623"/>
        <dbReference type="Rhea" id="RHEA-COMP:9954"/>
        <dbReference type="ChEBI" id="CHEBI:57856"/>
        <dbReference type="ChEBI" id="CHEBI:59789"/>
        <dbReference type="ChEBI" id="CHEBI:78449"/>
        <dbReference type="ChEBI" id="CHEBI:78845"/>
        <dbReference type="EC" id="2.1.1.197"/>
    </reaction>
</comment>
<comment type="pathway">
    <text evidence="1">Cofactor biosynthesis; biotin biosynthesis.</text>
</comment>
<comment type="similarity">
    <text evidence="1">Belongs to the methyltransferase superfamily.</text>
</comment>
<keyword id="KW-0093">Biotin biosynthesis</keyword>
<keyword id="KW-0489">Methyltransferase</keyword>
<keyword id="KW-1185">Reference proteome</keyword>
<keyword id="KW-0949">S-adenosyl-L-methionine</keyword>
<keyword id="KW-0808">Transferase</keyword>
<protein>
    <recommendedName>
        <fullName evidence="1">Malonyl-[acyl-carrier protein] O-methyltransferase</fullName>
        <shortName evidence="1">Malonyl-ACP O-methyltransferase</shortName>
        <ecNumber evidence="1">2.1.1.197</ecNumber>
    </recommendedName>
    <alternativeName>
        <fullName evidence="1">Biotin synthesis protein BioC</fullName>
    </alternativeName>
</protein>
<name>BIOC_METCA</name>
<sequence>MNSLPRPDIGPFADTPEKRWVGVSFGAAAVGYDGVAALQREVGESLLAGIRHLGPPPARMLDLGAGTGHFSGLLVAAFPTAECLALDIAEGMLRFLRSHRPGADGMGLVVGDAEALPLADESVDLIFSNMAFQWCERLDRAISECCRVLRPGGRLAFSTFGEATLAELRMAWRAVDGYTHVNAFATRRSVEQELRAQGFTKIRLDARTLRRGYPSVLALMKELKALGARNLTRNRPRHLLSRHTLERVSEAYGRLPGMASAVTASFEVLTALVEK</sequence>
<proteinExistence type="inferred from homology"/>
<accession>Q609U9</accession>
<dbReference type="EC" id="2.1.1.197" evidence="1"/>
<dbReference type="EMBL" id="AE017282">
    <property type="protein sequence ID" value="AAU92554.1"/>
    <property type="molecule type" value="Genomic_DNA"/>
</dbReference>
<dbReference type="RefSeq" id="WP_010960422.1">
    <property type="nucleotide sequence ID" value="NC_002977.6"/>
</dbReference>
<dbReference type="SMR" id="Q609U9"/>
<dbReference type="STRING" id="243233.MCA1128"/>
<dbReference type="GeneID" id="88223421"/>
<dbReference type="KEGG" id="mca:MCA1128"/>
<dbReference type="eggNOG" id="COG2226">
    <property type="taxonomic scope" value="Bacteria"/>
</dbReference>
<dbReference type="HOGENOM" id="CLU_046586_2_2_6"/>
<dbReference type="UniPathway" id="UPA00078"/>
<dbReference type="Proteomes" id="UP000006821">
    <property type="component" value="Chromosome"/>
</dbReference>
<dbReference type="GO" id="GO:0010340">
    <property type="term" value="F:carboxyl-O-methyltransferase activity"/>
    <property type="evidence" value="ECO:0007669"/>
    <property type="project" value="UniProtKB-UniRule"/>
</dbReference>
<dbReference type="GO" id="GO:0102130">
    <property type="term" value="F:malonyl-CoA methyltransferase activity"/>
    <property type="evidence" value="ECO:0007669"/>
    <property type="project" value="UniProtKB-EC"/>
</dbReference>
<dbReference type="GO" id="GO:0008757">
    <property type="term" value="F:S-adenosylmethionine-dependent methyltransferase activity"/>
    <property type="evidence" value="ECO:0007669"/>
    <property type="project" value="InterPro"/>
</dbReference>
<dbReference type="GO" id="GO:0009102">
    <property type="term" value="P:biotin biosynthetic process"/>
    <property type="evidence" value="ECO:0007669"/>
    <property type="project" value="UniProtKB-UniRule"/>
</dbReference>
<dbReference type="GO" id="GO:0032259">
    <property type="term" value="P:methylation"/>
    <property type="evidence" value="ECO:0007669"/>
    <property type="project" value="UniProtKB-KW"/>
</dbReference>
<dbReference type="CDD" id="cd02440">
    <property type="entry name" value="AdoMet_MTases"/>
    <property type="match status" value="1"/>
</dbReference>
<dbReference type="Gene3D" id="3.40.50.150">
    <property type="entry name" value="Vaccinia Virus protein VP39"/>
    <property type="match status" value="1"/>
</dbReference>
<dbReference type="HAMAP" id="MF_00835">
    <property type="entry name" value="BioC"/>
    <property type="match status" value="1"/>
</dbReference>
<dbReference type="InterPro" id="IPR011814">
    <property type="entry name" value="BioC"/>
</dbReference>
<dbReference type="InterPro" id="IPR050602">
    <property type="entry name" value="Malonyl-ACP_OMT"/>
</dbReference>
<dbReference type="InterPro" id="IPR013216">
    <property type="entry name" value="Methyltransf_11"/>
</dbReference>
<dbReference type="InterPro" id="IPR029063">
    <property type="entry name" value="SAM-dependent_MTases_sf"/>
</dbReference>
<dbReference type="NCBIfam" id="TIGR02072">
    <property type="entry name" value="BioC"/>
    <property type="match status" value="1"/>
</dbReference>
<dbReference type="PANTHER" id="PTHR13090">
    <property type="entry name" value="ARGININE-HYDROXYLASE NDUFAF5, MITOCHONDRIAL"/>
    <property type="match status" value="1"/>
</dbReference>
<dbReference type="PANTHER" id="PTHR13090:SF1">
    <property type="entry name" value="ARGININE-HYDROXYLASE NDUFAF5, MITOCHONDRIAL"/>
    <property type="match status" value="1"/>
</dbReference>
<dbReference type="Pfam" id="PF08241">
    <property type="entry name" value="Methyltransf_11"/>
    <property type="match status" value="1"/>
</dbReference>
<dbReference type="SUPFAM" id="SSF53335">
    <property type="entry name" value="S-adenosyl-L-methionine-dependent methyltransferases"/>
    <property type="match status" value="1"/>
</dbReference>
<reference key="1">
    <citation type="journal article" date="2004" name="PLoS Biol.">
        <title>Genomic insights into methanotrophy: the complete genome sequence of Methylococcus capsulatus (Bath).</title>
        <authorList>
            <person name="Ward N.L."/>
            <person name="Larsen O."/>
            <person name="Sakwa J."/>
            <person name="Bruseth L."/>
            <person name="Khouri H.M."/>
            <person name="Durkin A.S."/>
            <person name="Dimitrov G."/>
            <person name="Jiang L."/>
            <person name="Scanlan D."/>
            <person name="Kang K.H."/>
            <person name="Lewis M.R."/>
            <person name="Nelson K.E."/>
            <person name="Methe B.A."/>
            <person name="Wu M."/>
            <person name="Heidelberg J.F."/>
            <person name="Paulsen I.T."/>
            <person name="Fouts D.E."/>
            <person name="Ravel J."/>
            <person name="Tettelin H."/>
            <person name="Ren Q."/>
            <person name="Read T.D."/>
            <person name="DeBoy R.T."/>
            <person name="Seshadri R."/>
            <person name="Salzberg S.L."/>
            <person name="Jensen H.B."/>
            <person name="Birkeland N.K."/>
            <person name="Nelson W.C."/>
            <person name="Dodson R.J."/>
            <person name="Grindhaug S.H."/>
            <person name="Holt I.E."/>
            <person name="Eidhammer I."/>
            <person name="Jonasen I."/>
            <person name="Vanaken S."/>
            <person name="Utterback T.R."/>
            <person name="Feldblyum T.V."/>
            <person name="Fraser C.M."/>
            <person name="Lillehaug J.R."/>
            <person name="Eisen J.A."/>
        </authorList>
    </citation>
    <scope>NUCLEOTIDE SEQUENCE [LARGE SCALE GENOMIC DNA]</scope>
    <source>
        <strain>ATCC 33009 / NCIMB 11132 / Bath</strain>
    </source>
</reference>